<protein>
    <recommendedName>
        <fullName evidence="2">Ni-sirohydrochlorin a,c-diamide reductive cyclase complex, component CfbC</fullName>
        <ecNumber evidence="1">6.3.3.7</ecNumber>
    </recommendedName>
    <alternativeName>
        <fullName evidence="2">NifH homolog component CfbC</fullName>
    </alternativeName>
</protein>
<comment type="function">
    <text evidence="1">Involved in the biosynthesis of the unique nickel-containing tetrapyrrole coenzyme F430, the prosthetic group of methyl-coenzyme M reductase (MCR), which plays a key role in methanogenesis and anaerobic methane oxidation. Catalyzes both the six-electron reduction of the tetrahydroporphyrin ring system and the gamma-lactamization of the c-acetamide side chain of Ni-sirohydrochlorin a,c-diamide to yield 15,17(3)-seco-F430-17(3)-acid (seco-F430), the last intermediate in the biosynthesis of the coenzyme F430.</text>
</comment>
<comment type="catalytic activity">
    <reaction evidence="1">
        <text>Ni-sirohydrochlorin a,c-diamide + 3 AH2 + ATP + H2O = 15,17(3)-seco-F430-17(3)-acid + 3 A + ADP + phosphate</text>
        <dbReference type="Rhea" id="RHEA:52900"/>
        <dbReference type="ChEBI" id="CHEBI:13193"/>
        <dbReference type="ChEBI" id="CHEBI:15377"/>
        <dbReference type="ChEBI" id="CHEBI:17499"/>
        <dbReference type="ChEBI" id="CHEBI:30616"/>
        <dbReference type="ChEBI" id="CHEBI:43474"/>
        <dbReference type="ChEBI" id="CHEBI:136887"/>
        <dbReference type="ChEBI" id="CHEBI:136888"/>
        <dbReference type="ChEBI" id="CHEBI:456216"/>
        <dbReference type="EC" id="6.3.3.7"/>
    </reaction>
</comment>
<comment type="cofactor">
    <cofactor evidence="1">
        <name>[4Fe-4S] cluster</name>
        <dbReference type="ChEBI" id="CHEBI:49883"/>
    </cofactor>
</comment>
<comment type="subunit">
    <text evidence="1">Homodimer. The Ni-sirohydrochlorin a,c-diamide reductive cyclase complex is composed of a NifH homolog component CfbC and a NifD homolog component CfbD.</text>
</comment>
<comment type="similarity">
    <text evidence="3">Belongs to the NifH/BchL/ChlL family.</text>
</comment>
<name>CFBC_METBF</name>
<keyword id="KW-0067">ATP-binding</keyword>
<keyword id="KW-0408">Iron</keyword>
<keyword id="KW-0411">Iron-sulfur</keyword>
<keyword id="KW-0436">Ligase</keyword>
<keyword id="KW-0479">Metal-binding</keyword>
<keyword id="KW-0484">Methanogenesis</keyword>
<keyword id="KW-0547">Nucleotide-binding</keyword>
<accession>Q46FL1</accession>
<gene>
    <name evidence="2" type="primary">cfbC</name>
    <name evidence="4" type="ordered locus">Mbar_A0347</name>
</gene>
<proteinExistence type="evidence at protein level"/>
<organism>
    <name type="scientific">Methanosarcina barkeri (strain Fusaro / DSM 804)</name>
    <dbReference type="NCBI Taxonomy" id="269797"/>
    <lineage>
        <taxon>Archaea</taxon>
        <taxon>Methanobacteriati</taxon>
        <taxon>Methanobacteriota</taxon>
        <taxon>Stenosarchaea group</taxon>
        <taxon>Methanomicrobia</taxon>
        <taxon>Methanosarcinales</taxon>
        <taxon>Methanosarcinaceae</taxon>
        <taxon>Methanosarcina</taxon>
    </lineage>
</organism>
<reference key="1">
    <citation type="journal article" date="2006" name="J. Bacteriol.">
        <title>The Methanosarcina barkeri genome: comparative analysis with Methanosarcina acetivorans and Methanosarcina mazei reveals extensive rearrangement within methanosarcinal genomes.</title>
        <authorList>
            <person name="Maeder D.L."/>
            <person name="Anderson I."/>
            <person name="Brettin T.S."/>
            <person name="Bruce D.C."/>
            <person name="Gilna P."/>
            <person name="Han C.S."/>
            <person name="Lapidus A."/>
            <person name="Metcalf W.W."/>
            <person name="Saunders E."/>
            <person name="Tapia R."/>
            <person name="Sowers K.R."/>
        </authorList>
    </citation>
    <scope>NUCLEOTIDE SEQUENCE [LARGE SCALE GENOMIC DNA]</scope>
    <source>
        <strain>Fusaro / DSM 804</strain>
    </source>
</reference>
<reference key="2">
    <citation type="journal article" date="2017" name="Nature">
        <title>Elucidation of the biosynthesis of the methane catalyst coenzyme F430.</title>
        <authorList>
            <person name="Moore S.J."/>
            <person name="Sowa S.T."/>
            <person name="Schuchardt C."/>
            <person name="Deery E."/>
            <person name="Lawrence A.D."/>
            <person name="Ramos J.V."/>
            <person name="Billig S."/>
            <person name="Birkemeyer C."/>
            <person name="Chivers P.T."/>
            <person name="Howard M.J."/>
            <person name="Rigby S.E."/>
            <person name="Layer G."/>
            <person name="Warren M.J."/>
        </authorList>
    </citation>
    <scope>FUNCTION</scope>
    <scope>CATALYTIC ACTIVITY</scope>
    <scope>COFACTOR</scope>
    <scope>SUBUNIT</scope>
    <source>
        <strain>Fusaro / DSM 804</strain>
    </source>
</reference>
<feature type="chain" id="PRO_0000442425" description="Ni-sirohydrochlorin a,c-diamide reductive cyclase complex, component CfbC">
    <location>
        <begin position="1"/>
        <end position="265"/>
    </location>
</feature>
<evidence type="ECO:0000269" key="1">
    <source>
    </source>
</evidence>
<evidence type="ECO:0000303" key="2">
    <source>
    </source>
</evidence>
<evidence type="ECO:0000305" key="3"/>
<evidence type="ECO:0000312" key="4">
    <source>
        <dbReference type="EMBL" id="AAZ69331.1"/>
    </source>
</evidence>
<dbReference type="EC" id="6.3.3.7" evidence="1"/>
<dbReference type="EMBL" id="CP000099">
    <property type="protein sequence ID" value="AAZ69331.1"/>
    <property type="molecule type" value="Genomic_DNA"/>
</dbReference>
<dbReference type="SMR" id="Q46FL1"/>
<dbReference type="STRING" id="269797.Mbar_A0347"/>
<dbReference type="PaxDb" id="269797-Mbar_A0347"/>
<dbReference type="KEGG" id="mba:Mbar_A0347"/>
<dbReference type="eggNOG" id="arCOG00590">
    <property type="taxonomic scope" value="Archaea"/>
</dbReference>
<dbReference type="HOGENOM" id="CLU_059373_0_0_2"/>
<dbReference type="OrthoDB" id="145464at2157"/>
<dbReference type="GO" id="GO:0005524">
    <property type="term" value="F:ATP binding"/>
    <property type="evidence" value="ECO:0007669"/>
    <property type="project" value="UniProtKB-KW"/>
</dbReference>
<dbReference type="GO" id="GO:0051536">
    <property type="term" value="F:iron-sulfur cluster binding"/>
    <property type="evidence" value="ECO:0007669"/>
    <property type="project" value="UniProtKB-KW"/>
</dbReference>
<dbReference type="GO" id="GO:0016874">
    <property type="term" value="F:ligase activity"/>
    <property type="evidence" value="ECO:0007669"/>
    <property type="project" value="UniProtKB-KW"/>
</dbReference>
<dbReference type="GO" id="GO:0046872">
    <property type="term" value="F:metal ion binding"/>
    <property type="evidence" value="ECO:0007669"/>
    <property type="project" value="UniProtKB-KW"/>
</dbReference>
<dbReference type="GO" id="GO:0016491">
    <property type="term" value="F:oxidoreductase activity"/>
    <property type="evidence" value="ECO:0007669"/>
    <property type="project" value="InterPro"/>
</dbReference>
<dbReference type="GO" id="GO:0015948">
    <property type="term" value="P:methanogenesis"/>
    <property type="evidence" value="ECO:0007669"/>
    <property type="project" value="UniProtKB-KW"/>
</dbReference>
<dbReference type="CDD" id="cd02040">
    <property type="entry name" value="NifH"/>
    <property type="match status" value="1"/>
</dbReference>
<dbReference type="Gene3D" id="3.40.50.300">
    <property type="entry name" value="P-loop containing nucleotide triphosphate hydrolases"/>
    <property type="match status" value="1"/>
</dbReference>
<dbReference type="InterPro" id="IPR030655">
    <property type="entry name" value="NifH/chlL_CS"/>
</dbReference>
<dbReference type="InterPro" id="IPR000392">
    <property type="entry name" value="NifH/frxC"/>
</dbReference>
<dbReference type="InterPro" id="IPR027417">
    <property type="entry name" value="P-loop_NTPase"/>
</dbReference>
<dbReference type="NCBIfam" id="NF033200">
    <property type="entry name" value="F430_CfbC"/>
    <property type="match status" value="1"/>
</dbReference>
<dbReference type="PANTHER" id="PTHR42864">
    <property type="entry name" value="LIGHT-INDEPENDENT PROTOCHLOROPHYLLIDE REDUCTASE IRON-SULFUR ATP-BINDING PROTEIN"/>
    <property type="match status" value="1"/>
</dbReference>
<dbReference type="PANTHER" id="PTHR42864:SF2">
    <property type="entry name" value="LIGHT-INDEPENDENT PROTOCHLOROPHYLLIDE REDUCTASE IRON-SULFUR ATP-BINDING PROTEIN"/>
    <property type="match status" value="1"/>
</dbReference>
<dbReference type="Pfam" id="PF00142">
    <property type="entry name" value="Fer4_NifH"/>
    <property type="match status" value="1"/>
</dbReference>
<dbReference type="PIRSF" id="PIRSF000363">
    <property type="entry name" value="Nitrogenase_iron"/>
    <property type="match status" value="1"/>
</dbReference>
<dbReference type="PRINTS" id="PR00091">
    <property type="entry name" value="NITROGNASEII"/>
</dbReference>
<dbReference type="SUPFAM" id="SSF52540">
    <property type="entry name" value="P-loop containing nucleoside triphosphate hydrolases"/>
    <property type="match status" value="1"/>
</dbReference>
<dbReference type="PROSITE" id="PS00746">
    <property type="entry name" value="NIFH_FRXC_1"/>
    <property type="match status" value="1"/>
</dbReference>
<dbReference type="PROSITE" id="PS51026">
    <property type="entry name" value="NIFH_FRXC_3"/>
    <property type="match status" value="1"/>
</dbReference>
<sequence length="265" mass="28578">MKNQKIIAIYGKGGIGKSSTASNVAAACAEAGKKVMIIGCDPKSDSSITLLRGRRIPTILDLLREGVDIKKEDVVFEGYAGVKCVEAGGPEPGIGCAGRGIIVAIQKLKSISGNLLKEQDLIIYDVPGDIVCGGFVAPVRKGFVNEAYVLTSGEYMPLYAANNICKGLSKIGMPLSGVICNSRNVSREEEIVSKFSEEIGSQLMAFIPKRQVVQDCEREGYSVMEKAPESDIAEIYRKLGKAILENEKRVTADSLSDERLRELTK</sequence>